<accession>O53518</accession>
<accession>F2GJY7</accession>
<accession>I6Y8M9</accession>
<accession>L0TBR5</accession>
<keyword id="KW-0903">Direct protein sequencing</keyword>
<keyword id="KW-1185">Reference proteome</keyword>
<protein>
    <recommendedName>
        <fullName evidence="2">Protein Rv2184c</fullName>
    </recommendedName>
</protein>
<feature type="chain" id="PRO_0000456388" description="Protein Rv2184c">
    <location>
        <begin position="1"/>
        <end position="420"/>
    </location>
</feature>
<dbReference type="EMBL" id="AL123456">
    <property type="protein sequence ID" value="CCP44961.1"/>
    <property type="status" value="ALT_INIT"/>
    <property type="molecule type" value="Genomic_DNA"/>
</dbReference>
<dbReference type="RefSeq" id="NP_216700.1">
    <property type="nucleotide sequence ID" value="NC_000962.3"/>
</dbReference>
<dbReference type="RefSeq" id="WP_003411348.1">
    <property type="nucleotide sequence ID" value="NC_000962.3"/>
</dbReference>
<dbReference type="SMR" id="O53518"/>
<dbReference type="STRING" id="83332.Rv2184c"/>
<dbReference type="PaxDb" id="83332-Rv2184c"/>
<dbReference type="DNASU" id="888152"/>
<dbReference type="GeneID" id="888152"/>
<dbReference type="KEGG" id="mtu:Rv2184c"/>
<dbReference type="PATRIC" id="fig|83332.111.peg.2431"/>
<dbReference type="TubercuList" id="Rv2184c"/>
<dbReference type="eggNOG" id="COG0003">
    <property type="taxonomic scope" value="Bacteria"/>
</dbReference>
<dbReference type="InParanoid" id="O53518"/>
<dbReference type="OrthoDB" id="9780677at2"/>
<dbReference type="PhylomeDB" id="O53518"/>
<dbReference type="Proteomes" id="UP000001584">
    <property type="component" value="Chromosome"/>
</dbReference>
<dbReference type="GO" id="GO:0005524">
    <property type="term" value="F:ATP binding"/>
    <property type="evidence" value="ECO:0007669"/>
    <property type="project" value="InterPro"/>
</dbReference>
<dbReference type="GO" id="GO:0016887">
    <property type="term" value="F:ATP hydrolysis activity"/>
    <property type="evidence" value="ECO:0000318"/>
    <property type="project" value="GO_Central"/>
</dbReference>
<dbReference type="CDD" id="cd02035">
    <property type="entry name" value="ArsA"/>
    <property type="match status" value="1"/>
</dbReference>
<dbReference type="FunFam" id="2.60.40.790:FF:000052">
    <property type="entry name" value="ArsA family ATPase"/>
    <property type="match status" value="1"/>
</dbReference>
<dbReference type="Gene3D" id="2.60.40.790">
    <property type="match status" value="1"/>
</dbReference>
<dbReference type="Gene3D" id="3.40.50.300">
    <property type="entry name" value="P-loop containing nucleotide triphosphate hydrolases"/>
    <property type="match status" value="1"/>
</dbReference>
<dbReference type="InterPro" id="IPR025723">
    <property type="entry name" value="Anion-transp_ATPase-like_dom"/>
</dbReference>
<dbReference type="InterPro" id="IPR040612">
    <property type="entry name" value="ArsA_HSP20-like"/>
</dbReference>
<dbReference type="InterPro" id="IPR016300">
    <property type="entry name" value="ATPase_ArsA/GET3"/>
</dbReference>
<dbReference type="InterPro" id="IPR008978">
    <property type="entry name" value="HSP20-like_chaperone"/>
</dbReference>
<dbReference type="InterPro" id="IPR027417">
    <property type="entry name" value="P-loop_NTPase"/>
</dbReference>
<dbReference type="PANTHER" id="PTHR10803">
    <property type="entry name" value="ARSENICAL PUMP-DRIVING ATPASE ARSENITE-TRANSLOCATING ATPASE"/>
    <property type="match status" value="1"/>
</dbReference>
<dbReference type="PANTHER" id="PTHR10803:SF3">
    <property type="entry name" value="ATPASE GET3"/>
    <property type="match status" value="1"/>
</dbReference>
<dbReference type="Pfam" id="PF02374">
    <property type="entry name" value="ArsA_ATPase"/>
    <property type="match status" value="1"/>
</dbReference>
<dbReference type="Pfam" id="PF17886">
    <property type="entry name" value="ArsA_HSP20"/>
    <property type="match status" value="1"/>
</dbReference>
<dbReference type="SUPFAM" id="SSF52540">
    <property type="entry name" value="P-loop containing nucleoside triphosphate hydrolases"/>
    <property type="match status" value="1"/>
</dbReference>
<evidence type="ECO:0000269" key="1">
    <source>
    </source>
</evidence>
<evidence type="ECO:0000305" key="2"/>
<evidence type="ECO:0000312" key="3">
    <source>
        <dbReference type="EMBL" id="CCP44961.1"/>
    </source>
</evidence>
<evidence type="ECO:0007744" key="4">
    <source>
    </source>
</evidence>
<comment type="similarity">
    <text evidence="2">Belongs to the arsA ATPase family.</text>
</comment>
<comment type="sequence caution" evidence="1">
    <conflict type="erroneous initiation">
        <sequence resource="EMBL-CDS" id="CCP44961"/>
    </conflict>
    <text>Truncated N-terminus.</text>
</comment>
<gene>
    <name evidence="3" type="ordered locus">Rv2184c</name>
</gene>
<sequence length="420" mass="44744">MSDSGTPAQARISLFVGKGGVGKSTLASATAVCDAGAGQRVLVVSTDQAHSLGDVLGIAVPPTGQGDPVRVLAYDPEAGGGFLDALALDTLALLEGRWLHVVETLDRRFPGSELSSIAPEELCALPGIQEVLGLHAVGELAAARRWDRIVVDCASTADALRMLTLPATFGLYVERAWPRHRRLSIGADDGRSAVLAELLERIRASVERLSTLLTDGALVSAHLVLTPERVVAAEAVRTLGSLALMGVRVEELLVNQLLVQDENYEYRSLPDHPAFHWYAERIGEQRAVLDDLDATIGDVALVLVPHLAGEPIGPKALGGLLDSARRRQGSAPPGPLQPIVDLESGSGLASIYRLRLALPQLDPGTLTLGRADDDLIVSAGGMRRRVRLASVLRRCTVLDAHLRGGELTVRFRPNPEVWPT</sequence>
<organism>
    <name type="scientific">Mycobacterium tuberculosis (strain ATCC 25618 / H37Rv)</name>
    <dbReference type="NCBI Taxonomy" id="83332"/>
    <lineage>
        <taxon>Bacteria</taxon>
        <taxon>Bacillati</taxon>
        <taxon>Actinomycetota</taxon>
        <taxon>Actinomycetes</taxon>
        <taxon>Mycobacteriales</taxon>
        <taxon>Mycobacteriaceae</taxon>
        <taxon>Mycobacterium</taxon>
        <taxon>Mycobacterium tuberculosis complex</taxon>
    </lineage>
</organism>
<reference evidence="3" key="1">
    <citation type="journal article" date="1998" name="Nature">
        <title>Deciphering the biology of Mycobacterium tuberculosis from the complete genome sequence.</title>
        <authorList>
            <person name="Cole S.T."/>
            <person name="Brosch R."/>
            <person name="Parkhill J."/>
            <person name="Garnier T."/>
            <person name="Churcher C.M."/>
            <person name="Harris D.E."/>
            <person name="Gordon S.V."/>
            <person name="Eiglmeier K."/>
            <person name="Gas S."/>
            <person name="Barry C.E. III"/>
            <person name="Tekaia F."/>
            <person name="Badcock K."/>
            <person name="Basham D."/>
            <person name="Brown D."/>
            <person name="Chillingworth T."/>
            <person name="Connor R."/>
            <person name="Davies R.M."/>
            <person name="Devlin K."/>
            <person name="Feltwell T."/>
            <person name="Gentles S."/>
            <person name="Hamlin N."/>
            <person name="Holroyd S."/>
            <person name="Hornsby T."/>
            <person name="Jagels K."/>
            <person name="Krogh A."/>
            <person name="McLean J."/>
            <person name="Moule S."/>
            <person name="Murphy L.D."/>
            <person name="Oliver S."/>
            <person name="Osborne J."/>
            <person name="Quail M.A."/>
            <person name="Rajandream M.A."/>
            <person name="Rogers J."/>
            <person name="Rutter S."/>
            <person name="Seeger K."/>
            <person name="Skelton S."/>
            <person name="Squares S."/>
            <person name="Squares R."/>
            <person name="Sulston J.E."/>
            <person name="Taylor K."/>
            <person name="Whitehead S."/>
            <person name="Barrell B.G."/>
        </authorList>
    </citation>
    <scope>NUCLEOTIDE SEQUENCE [LARGE SCALE GENOMIC DNA]</scope>
    <source>
        <strain>ATCC 25618 / H37Rv</strain>
    </source>
</reference>
<reference key="2">
    <citation type="journal article" date="2022" name="Genomics">
        <title>Deep N-terminomics of Mycobacterium tuberculosis H37Rv extensively correct annotated encoding genes.</title>
        <authorList>
            <person name="Shi J."/>
            <person name="Meng S."/>
            <person name="Wan L."/>
            <person name="Zhang Z."/>
            <person name="Jiang S."/>
            <person name="Zhu H."/>
            <person name="Dai E."/>
            <person name="Chang L."/>
            <person name="Gao H."/>
            <person name="Wan K."/>
            <person name="Zhang L."/>
            <person name="Zhao X."/>
            <person name="Liu H."/>
            <person name="Lyu Z."/>
            <person name="Zhang Y."/>
            <person name="Xu P."/>
        </authorList>
    </citation>
    <scope>PROTEIN SEQUENCE OF 24-40</scope>
    <scope>SEQUENCE REVISION TO N-TERMINUS</scope>
    <source>
        <strain>H37Rv</strain>
    </source>
</reference>
<reference evidence="4" key="3">
    <citation type="journal article" date="2011" name="Mol. Cell. Proteomics">
        <title>Proteogenomic analysis of Mycobacterium tuberculosis by high resolution mass spectrometry.</title>
        <authorList>
            <person name="Kelkar D.S."/>
            <person name="Kumar D."/>
            <person name="Kumar P."/>
            <person name="Balakrishnan L."/>
            <person name="Muthusamy B."/>
            <person name="Yadav A.K."/>
            <person name="Shrivastava P."/>
            <person name="Marimuthu A."/>
            <person name="Anand S."/>
            <person name="Sundaram H."/>
            <person name="Kingsbury R."/>
            <person name="Harsha H.C."/>
            <person name="Nair B."/>
            <person name="Prasad T.S."/>
            <person name="Chauhan D.S."/>
            <person name="Katoch K."/>
            <person name="Katoch V.M."/>
            <person name="Kumar P."/>
            <person name="Chaerkady R."/>
            <person name="Ramachandran S."/>
            <person name="Dash D."/>
            <person name="Pandey A."/>
        </authorList>
    </citation>
    <scope>IDENTIFICATION BY MASS SPECTROMETRY [LARGE SCALE ANALYSIS]</scope>
</reference>
<proteinExistence type="evidence at protein level"/>
<name>Y2184_MYCTU</name>